<evidence type="ECO:0000255" key="1">
    <source>
        <dbReference type="HAMAP-Rule" id="MF_00537"/>
    </source>
</evidence>
<evidence type="ECO:0000305" key="2"/>
<keyword id="KW-0687">Ribonucleoprotein</keyword>
<keyword id="KW-0689">Ribosomal protein</keyword>
<keyword id="KW-0694">RNA-binding</keyword>
<keyword id="KW-0699">rRNA-binding</keyword>
<sequence length="101" mass="11758">MAKKSMINRDIKRTKLVEKYKVKRLELKKIIKSINVSDEERFQATIKLQALPRDASPTRQRNRCALTGRPHGFYRKFGLARTKLRERTMNGEAPGLSKASW</sequence>
<dbReference type="EMBL" id="CP000488">
    <property type="protein sequence ID" value="ABL01970.1"/>
    <property type="molecule type" value="Genomic_DNA"/>
</dbReference>
<dbReference type="RefSeq" id="WP_011737596.1">
    <property type="nucleotide sequence ID" value="NC_008610.1"/>
</dbReference>
<dbReference type="SMR" id="A1AVL3"/>
<dbReference type="STRING" id="413404.Rmag_0178"/>
<dbReference type="KEGG" id="rma:Rmag_0178"/>
<dbReference type="eggNOG" id="COG0199">
    <property type="taxonomic scope" value="Bacteria"/>
</dbReference>
<dbReference type="HOGENOM" id="CLU_139869_0_1_6"/>
<dbReference type="OrthoDB" id="9810484at2"/>
<dbReference type="Proteomes" id="UP000002587">
    <property type="component" value="Chromosome"/>
</dbReference>
<dbReference type="GO" id="GO:0005737">
    <property type="term" value="C:cytoplasm"/>
    <property type="evidence" value="ECO:0007669"/>
    <property type="project" value="UniProtKB-ARBA"/>
</dbReference>
<dbReference type="GO" id="GO:0015935">
    <property type="term" value="C:small ribosomal subunit"/>
    <property type="evidence" value="ECO:0007669"/>
    <property type="project" value="TreeGrafter"/>
</dbReference>
<dbReference type="GO" id="GO:0019843">
    <property type="term" value="F:rRNA binding"/>
    <property type="evidence" value="ECO:0007669"/>
    <property type="project" value="UniProtKB-UniRule"/>
</dbReference>
<dbReference type="GO" id="GO:0003735">
    <property type="term" value="F:structural constituent of ribosome"/>
    <property type="evidence" value="ECO:0007669"/>
    <property type="project" value="InterPro"/>
</dbReference>
<dbReference type="GO" id="GO:0006412">
    <property type="term" value="P:translation"/>
    <property type="evidence" value="ECO:0007669"/>
    <property type="project" value="UniProtKB-UniRule"/>
</dbReference>
<dbReference type="FunFam" id="1.10.287.1480:FF:000001">
    <property type="entry name" value="30S ribosomal protein S14"/>
    <property type="match status" value="1"/>
</dbReference>
<dbReference type="Gene3D" id="1.10.287.1480">
    <property type="match status" value="1"/>
</dbReference>
<dbReference type="HAMAP" id="MF_00537">
    <property type="entry name" value="Ribosomal_uS14_1"/>
    <property type="match status" value="1"/>
</dbReference>
<dbReference type="InterPro" id="IPR001209">
    <property type="entry name" value="Ribosomal_uS14"/>
</dbReference>
<dbReference type="InterPro" id="IPR023036">
    <property type="entry name" value="Ribosomal_uS14_bac/plastid"/>
</dbReference>
<dbReference type="NCBIfam" id="NF006477">
    <property type="entry name" value="PRK08881.1"/>
    <property type="match status" value="1"/>
</dbReference>
<dbReference type="PANTHER" id="PTHR19836">
    <property type="entry name" value="30S RIBOSOMAL PROTEIN S14"/>
    <property type="match status" value="1"/>
</dbReference>
<dbReference type="PANTHER" id="PTHR19836:SF19">
    <property type="entry name" value="SMALL RIBOSOMAL SUBUNIT PROTEIN US14M"/>
    <property type="match status" value="1"/>
</dbReference>
<dbReference type="Pfam" id="PF00253">
    <property type="entry name" value="Ribosomal_S14"/>
    <property type="match status" value="1"/>
</dbReference>
<dbReference type="SUPFAM" id="SSF57716">
    <property type="entry name" value="Glucocorticoid receptor-like (DNA-binding domain)"/>
    <property type="match status" value="1"/>
</dbReference>
<proteinExistence type="inferred from homology"/>
<comment type="function">
    <text evidence="1">Binds 16S rRNA, required for the assembly of 30S particles and may also be responsible for determining the conformation of the 16S rRNA at the A site.</text>
</comment>
<comment type="subunit">
    <text evidence="1">Part of the 30S ribosomal subunit. Contacts proteins S3 and S10.</text>
</comment>
<comment type="similarity">
    <text evidence="1">Belongs to the universal ribosomal protein uS14 family.</text>
</comment>
<accession>A1AVL3</accession>
<protein>
    <recommendedName>
        <fullName evidence="1">Small ribosomal subunit protein uS14</fullName>
    </recommendedName>
    <alternativeName>
        <fullName evidence="2">30S ribosomal protein S14</fullName>
    </alternativeName>
</protein>
<feature type="chain" id="PRO_1000128552" description="Small ribosomal subunit protein uS14">
    <location>
        <begin position="1"/>
        <end position="101"/>
    </location>
</feature>
<name>RS14_RUTMC</name>
<gene>
    <name evidence="1" type="primary">rpsN</name>
    <name type="ordered locus">Rmag_0178</name>
</gene>
<reference key="1">
    <citation type="journal article" date="2007" name="Science">
        <title>The Calyptogena magnifica chemoautotrophic symbiont genome.</title>
        <authorList>
            <person name="Newton I.L.G."/>
            <person name="Woyke T."/>
            <person name="Auchtung T.A."/>
            <person name="Dilly G.F."/>
            <person name="Dutton R.J."/>
            <person name="Fisher M.C."/>
            <person name="Fontanez K.M."/>
            <person name="Lau E."/>
            <person name="Stewart F.J."/>
            <person name="Richardson P.M."/>
            <person name="Barry K.W."/>
            <person name="Saunders E."/>
            <person name="Detter J.C."/>
            <person name="Wu D."/>
            <person name="Eisen J.A."/>
            <person name="Cavanaugh C.M."/>
        </authorList>
    </citation>
    <scope>NUCLEOTIDE SEQUENCE [LARGE SCALE GENOMIC DNA]</scope>
</reference>
<organism>
    <name type="scientific">Ruthia magnifica subsp. Calyptogena magnifica</name>
    <dbReference type="NCBI Taxonomy" id="413404"/>
    <lineage>
        <taxon>Bacteria</taxon>
        <taxon>Pseudomonadati</taxon>
        <taxon>Pseudomonadota</taxon>
        <taxon>Gammaproteobacteria</taxon>
        <taxon>Candidatus Pseudothioglobaceae</taxon>
        <taxon>Candidatus Ruthturnera</taxon>
    </lineage>
</organism>